<keyword id="KW-0028">Amino-acid biosynthesis</keyword>
<keyword id="KW-0963">Cytoplasm</keyword>
<keyword id="KW-0368">Histidine biosynthesis</keyword>
<keyword id="KW-0378">Hydrolase</keyword>
<keyword id="KW-0460">Magnesium</keyword>
<keyword id="KW-0479">Metal-binding</keyword>
<keyword id="KW-1185">Reference proteome</keyword>
<keyword id="KW-0862">Zinc</keyword>
<comment type="function">
    <text evidence="1">Catalyzes the hydrolysis of the adenine ring of phosphoribosyl-AMP.</text>
</comment>
<comment type="catalytic activity">
    <reaction evidence="1">
        <text>1-(5-phospho-beta-D-ribosyl)-5'-AMP + H2O = 1-(5-phospho-beta-D-ribosyl)-5-[(5-phospho-beta-D-ribosylamino)methylideneamino]imidazole-4-carboxamide</text>
        <dbReference type="Rhea" id="RHEA:20049"/>
        <dbReference type="ChEBI" id="CHEBI:15377"/>
        <dbReference type="ChEBI" id="CHEBI:58435"/>
        <dbReference type="ChEBI" id="CHEBI:59457"/>
        <dbReference type="EC" id="3.5.4.19"/>
    </reaction>
</comment>
<comment type="cofactor">
    <cofactor evidence="1">
        <name>Mg(2+)</name>
        <dbReference type="ChEBI" id="CHEBI:18420"/>
    </cofactor>
    <text evidence="1">Binds 1 Mg(2+) ion per subunit.</text>
</comment>
<comment type="cofactor">
    <cofactor evidence="1">
        <name>Zn(2+)</name>
        <dbReference type="ChEBI" id="CHEBI:29105"/>
    </cofactor>
    <text evidence="1">Binds 1 zinc ion per subunit.</text>
</comment>
<comment type="pathway">
    <text evidence="1">Amino-acid biosynthesis; L-histidine biosynthesis; L-histidine from 5-phospho-alpha-D-ribose 1-diphosphate: step 3/9.</text>
</comment>
<comment type="subunit">
    <text evidence="1">Homodimer.</text>
</comment>
<comment type="subcellular location">
    <subcellularLocation>
        <location evidence="1">Cytoplasm</location>
    </subcellularLocation>
</comment>
<comment type="similarity">
    <text evidence="1">Belongs to the PRA-CH family.</text>
</comment>
<reference key="1">
    <citation type="submission" date="2007-03" db="EMBL/GenBank/DDBJ databases">
        <title>Genome sequence of Rhodospirillum centenum.</title>
        <authorList>
            <person name="Touchman J.W."/>
            <person name="Bauer C."/>
            <person name="Blankenship R.E."/>
        </authorList>
    </citation>
    <scope>NUCLEOTIDE SEQUENCE [LARGE SCALE GENOMIC DNA]</scope>
    <source>
        <strain>ATCC 51521 / SW</strain>
    </source>
</reference>
<dbReference type="EC" id="3.5.4.19" evidence="1"/>
<dbReference type="EMBL" id="CP000613">
    <property type="protein sequence ID" value="ACI98562.1"/>
    <property type="molecule type" value="Genomic_DNA"/>
</dbReference>
<dbReference type="RefSeq" id="WP_012566351.1">
    <property type="nucleotide sequence ID" value="NC_011420.2"/>
</dbReference>
<dbReference type="SMR" id="B6IMI3"/>
<dbReference type="STRING" id="414684.RC1_1146"/>
<dbReference type="KEGG" id="rce:RC1_1146"/>
<dbReference type="eggNOG" id="COG0139">
    <property type="taxonomic scope" value="Bacteria"/>
</dbReference>
<dbReference type="HOGENOM" id="CLU_048577_5_2_5"/>
<dbReference type="OrthoDB" id="9795769at2"/>
<dbReference type="UniPathway" id="UPA00031">
    <property type="reaction ID" value="UER00008"/>
</dbReference>
<dbReference type="Proteomes" id="UP000001591">
    <property type="component" value="Chromosome"/>
</dbReference>
<dbReference type="GO" id="GO:0005737">
    <property type="term" value="C:cytoplasm"/>
    <property type="evidence" value="ECO:0007669"/>
    <property type="project" value="UniProtKB-SubCell"/>
</dbReference>
<dbReference type="GO" id="GO:0000287">
    <property type="term" value="F:magnesium ion binding"/>
    <property type="evidence" value="ECO:0007669"/>
    <property type="project" value="UniProtKB-UniRule"/>
</dbReference>
<dbReference type="GO" id="GO:0004635">
    <property type="term" value="F:phosphoribosyl-AMP cyclohydrolase activity"/>
    <property type="evidence" value="ECO:0007669"/>
    <property type="project" value="UniProtKB-UniRule"/>
</dbReference>
<dbReference type="GO" id="GO:0008270">
    <property type="term" value="F:zinc ion binding"/>
    <property type="evidence" value="ECO:0007669"/>
    <property type="project" value="UniProtKB-UniRule"/>
</dbReference>
<dbReference type="GO" id="GO:0000105">
    <property type="term" value="P:L-histidine biosynthetic process"/>
    <property type="evidence" value="ECO:0007669"/>
    <property type="project" value="UniProtKB-UniRule"/>
</dbReference>
<dbReference type="FunFam" id="3.10.20.810:FF:000001">
    <property type="entry name" value="Histidine biosynthesis bifunctional protein HisIE"/>
    <property type="match status" value="1"/>
</dbReference>
<dbReference type="Gene3D" id="4.10.80.70">
    <property type="match status" value="1"/>
</dbReference>
<dbReference type="Gene3D" id="3.10.20.810">
    <property type="entry name" value="Phosphoribosyl-AMP cyclohydrolase"/>
    <property type="match status" value="1"/>
</dbReference>
<dbReference type="HAMAP" id="MF_01021">
    <property type="entry name" value="HisI"/>
    <property type="match status" value="1"/>
</dbReference>
<dbReference type="InterPro" id="IPR026660">
    <property type="entry name" value="PRA-CH"/>
</dbReference>
<dbReference type="InterPro" id="IPR002496">
    <property type="entry name" value="PRib_AMP_CycHydrolase_dom"/>
</dbReference>
<dbReference type="InterPro" id="IPR038019">
    <property type="entry name" value="PRib_AMP_CycHydrolase_sf"/>
</dbReference>
<dbReference type="NCBIfam" id="NF000768">
    <property type="entry name" value="PRK00051.1"/>
    <property type="match status" value="1"/>
</dbReference>
<dbReference type="PANTHER" id="PTHR42945">
    <property type="entry name" value="HISTIDINE BIOSYNTHESIS BIFUNCTIONAL PROTEIN"/>
    <property type="match status" value="1"/>
</dbReference>
<dbReference type="PANTHER" id="PTHR42945:SF1">
    <property type="entry name" value="HISTIDINE BIOSYNTHESIS BIFUNCTIONAL PROTEIN HIS7"/>
    <property type="match status" value="1"/>
</dbReference>
<dbReference type="Pfam" id="PF01502">
    <property type="entry name" value="PRA-CH"/>
    <property type="match status" value="1"/>
</dbReference>
<dbReference type="SUPFAM" id="SSF141734">
    <property type="entry name" value="HisI-like"/>
    <property type="match status" value="1"/>
</dbReference>
<evidence type="ECO:0000255" key="1">
    <source>
        <dbReference type="HAMAP-Rule" id="MF_01021"/>
    </source>
</evidence>
<sequence>MTTAVLEALFAELRFDADGLVPAIAQQHDTGEVLMLAWMNRESIKETLAGGRVVYWSRSRRALWRKGDTSGQIQHLKELRLDCDGDALLLLVDQVGVACHTGRRNCFYRAVRDGTLAVIADVEVPAEELYGKG</sequence>
<organism>
    <name type="scientific">Rhodospirillum centenum (strain ATCC 51521 / SW)</name>
    <dbReference type="NCBI Taxonomy" id="414684"/>
    <lineage>
        <taxon>Bacteria</taxon>
        <taxon>Pseudomonadati</taxon>
        <taxon>Pseudomonadota</taxon>
        <taxon>Alphaproteobacteria</taxon>
        <taxon>Rhodospirillales</taxon>
        <taxon>Rhodospirillaceae</taxon>
        <taxon>Rhodospirillum</taxon>
    </lineage>
</organism>
<accession>B6IMI3</accession>
<protein>
    <recommendedName>
        <fullName evidence="1">Phosphoribosyl-AMP cyclohydrolase</fullName>
        <shortName evidence="1">PRA-CH</shortName>
        <ecNumber evidence="1">3.5.4.19</ecNumber>
    </recommendedName>
</protein>
<gene>
    <name evidence="1" type="primary">hisI</name>
    <name type="ordered locus">RC1_1146</name>
</gene>
<name>HIS3_RHOCS</name>
<proteinExistence type="inferred from homology"/>
<feature type="chain" id="PRO_1000135365" description="Phosphoribosyl-AMP cyclohydrolase">
    <location>
        <begin position="1"/>
        <end position="133"/>
    </location>
</feature>
<feature type="binding site" evidence="1">
    <location>
        <position position="82"/>
    </location>
    <ligand>
        <name>Mg(2+)</name>
        <dbReference type="ChEBI" id="CHEBI:18420"/>
    </ligand>
</feature>
<feature type="binding site" evidence="1">
    <location>
        <position position="83"/>
    </location>
    <ligand>
        <name>Zn(2+)</name>
        <dbReference type="ChEBI" id="CHEBI:29105"/>
        <note>ligand shared between dimeric partners</note>
    </ligand>
</feature>
<feature type="binding site" evidence="1">
    <location>
        <position position="84"/>
    </location>
    <ligand>
        <name>Mg(2+)</name>
        <dbReference type="ChEBI" id="CHEBI:18420"/>
    </ligand>
</feature>
<feature type="binding site" evidence="1">
    <location>
        <position position="86"/>
    </location>
    <ligand>
        <name>Mg(2+)</name>
        <dbReference type="ChEBI" id="CHEBI:18420"/>
    </ligand>
</feature>
<feature type="binding site" evidence="1">
    <location>
        <position position="99"/>
    </location>
    <ligand>
        <name>Zn(2+)</name>
        <dbReference type="ChEBI" id="CHEBI:29105"/>
        <note>ligand shared between dimeric partners</note>
    </ligand>
</feature>
<feature type="binding site" evidence="1">
    <location>
        <position position="106"/>
    </location>
    <ligand>
        <name>Zn(2+)</name>
        <dbReference type="ChEBI" id="CHEBI:29105"/>
        <note>ligand shared between dimeric partners</note>
    </ligand>
</feature>